<keyword id="KW-0002">3D-structure</keyword>
<keyword id="KW-0007">Acetylation</keyword>
<keyword id="KW-0025">Alternative splicing</keyword>
<keyword id="KW-0238">DNA-binding</keyword>
<keyword id="KW-1017">Isopeptide bond</keyword>
<keyword id="KW-0539">Nucleus</keyword>
<keyword id="KW-0597">Phosphoprotein</keyword>
<keyword id="KW-1267">Proteomics identification</keyword>
<keyword id="KW-1185">Reference proteome</keyword>
<keyword id="KW-0677">Repeat</keyword>
<keyword id="KW-0832">Ubl conjugation</keyword>
<keyword id="KW-0853">WD repeat</keyword>
<evidence type="ECO:0000250" key="1">
    <source>
        <dbReference type="UniProtKB" id="P59328"/>
    </source>
</evidence>
<evidence type="ECO:0000255" key="2">
    <source>
        <dbReference type="PROSITE-ProRule" id="PRU00267"/>
    </source>
</evidence>
<evidence type="ECO:0000256" key="3">
    <source>
        <dbReference type="SAM" id="MobiDB-lite"/>
    </source>
</evidence>
<evidence type="ECO:0000269" key="4">
    <source>
    </source>
</evidence>
<evidence type="ECO:0000269" key="5">
    <source>
    </source>
</evidence>
<evidence type="ECO:0000269" key="6">
    <source>
    </source>
</evidence>
<evidence type="ECO:0000269" key="7">
    <source>
    </source>
</evidence>
<evidence type="ECO:0000269" key="8">
    <source>
    </source>
</evidence>
<evidence type="ECO:0000269" key="9">
    <source>
    </source>
</evidence>
<evidence type="ECO:0000305" key="10"/>
<evidence type="ECO:0000305" key="11">
    <source>
    </source>
</evidence>
<evidence type="ECO:0000305" key="12">
    <source>
    </source>
</evidence>
<evidence type="ECO:0000312" key="13">
    <source>
        <dbReference type="HGNC" id="HGNC:23170"/>
    </source>
</evidence>
<evidence type="ECO:0007744" key="14">
    <source>
        <dbReference type="PDB" id="6XTY"/>
    </source>
</evidence>
<evidence type="ECO:0007744" key="15">
    <source>
        <dbReference type="PDB" id="7PFO"/>
    </source>
</evidence>
<evidence type="ECO:0007744" key="16">
    <source>
        <dbReference type="PDB" id="7PLO"/>
    </source>
</evidence>
<evidence type="ECO:0007744" key="17">
    <source>
    </source>
</evidence>
<evidence type="ECO:0007744" key="18">
    <source>
    </source>
</evidence>
<evidence type="ECO:0007744" key="19">
    <source>
    </source>
</evidence>
<evidence type="ECO:0007744" key="20">
    <source>
    </source>
</evidence>
<evidence type="ECO:0007744" key="21">
    <source>
    </source>
</evidence>
<evidence type="ECO:0007744" key="22">
    <source>
    </source>
</evidence>
<evidence type="ECO:0007744" key="23">
    <source>
    </source>
</evidence>
<evidence type="ECO:0007744" key="24">
    <source>
    </source>
</evidence>
<evidence type="ECO:0007744" key="25">
    <source>
    </source>
</evidence>
<evidence type="ECO:0007744" key="26">
    <source>
    </source>
</evidence>
<evidence type="ECO:0007744" key="27">
    <source>
    </source>
</evidence>
<evidence type="ECO:0007829" key="28">
    <source>
        <dbReference type="PDB" id="2D7L"/>
    </source>
</evidence>
<evidence type="ECO:0007829" key="29">
    <source>
        <dbReference type="PDB" id="5GVA"/>
    </source>
</evidence>
<evidence type="ECO:0007829" key="30">
    <source>
        <dbReference type="PDB" id="5OGS"/>
    </source>
</evidence>
<feature type="chain" id="PRO_0000051338" description="WD repeat and HMG-box DNA-binding protein 1">
    <location>
        <begin position="1"/>
        <end position="1129"/>
    </location>
</feature>
<feature type="repeat" description="WD 1">
    <location>
        <begin position="11"/>
        <end position="50"/>
    </location>
</feature>
<feature type="repeat" description="WD 2">
    <location>
        <begin position="52"/>
        <end position="91"/>
    </location>
</feature>
<feature type="repeat" description="WD 3">
    <location>
        <begin position="92"/>
        <end position="131"/>
    </location>
</feature>
<feature type="repeat" description="WD 4">
    <location>
        <begin position="134"/>
        <end position="173"/>
    </location>
</feature>
<feature type="repeat" description="WD 5">
    <location>
        <begin position="184"/>
        <end position="223"/>
    </location>
</feature>
<feature type="repeat" description="WD 6">
    <location>
        <begin position="228"/>
        <end position="267"/>
    </location>
</feature>
<feature type="repeat" description="WD 7">
    <location>
        <begin position="271"/>
        <end position="310"/>
    </location>
</feature>
<feature type="DNA-binding region" description="HMG box" evidence="2">
    <location>
        <begin position="1016"/>
        <end position="1079"/>
    </location>
</feature>
<feature type="region of interest" description="Disordered" evidence="3">
    <location>
        <begin position="848"/>
        <end position="897"/>
    </location>
</feature>
<feature type="region of interest" description="Disordered" evidence="3">
    <location>
        <begin position="916"/>
        <end position="1017"/>
    </location>
</feature>
<feature type="region of interest" description="Disordered" evidence="3">
    <location>
        <begin position="1068"/>
        <end position="1113"/>
    </location>
</feature>
<feature type="compositionally biased region" description="Polar residues" evidence="3">
    <location>
        <begin position="848"/>
        <end position="857"/>
    </location>
</feature>
<feature type="compositionally biased region" description="Acidic residues" evidence="3">
    <location>
        <begin position="862"/>
        <end position="876"/>
    </location>
</feature>
<feature type="compositionally biased region" description="Polar residues" evidence="3">
    <location>
        <begin position="883"/>
        <end position="897"/>
    </location>
</feature>
<feature type="compositionally biased region" description="Polar residues" evidence="3">
    <location>
        <begin position="926"/>
        <end position="936"/>
    </location>
</feature>
<feature type="compositionally biased region" description="Polar residues" evidence="3">
    <location>
        <begin position="945"/>
        <end position="956"/>
    </location>
</feature>
<feature type="compositionally biased region" description="Polar residues" evidence="3">
    <location>
        <begin position="974"/>
        <end position="987"/>
    </location>
</feature>
<feature type="compositionally biased region" description="Basic and acidic residues" evidence="3">
    <location>
        <begin position="988"/>
        <end position="997"/>
    </location>
</feature>
<feature type="modified residue" description="Phosphoserine" evidence="19 21 22">
    <location>
        <position position="333"/>
    </location>
</feature>
<feature type="modified residue" description="Phosphoserine" evidence="17 21">
    <location>
        <position position="374"/>
    </location>
</feature>
<feature type="modified residue" description="Phosphoserine" evidence="17 19 21 22 23 24">
    <location>
        <position position="383"/>
    </location>
</feature>
<feature type="modified residue" description="Phosphoserine" evidence="19 22">
    <location>
        <position position="387"/>
    </location>
</feature>
<feature type="modified residue" description="N6-acetyllysine" evidence="1">
    <location>
        <position position="671"/>
    </location>
</feature>
<feature type="modified residue" description="Phosphothreonine" evidence="18">
    <location>
        <position position="824"/>
    </location>
</feature>
<feature type="modified residue" description="Phosphothreonine" evidence="24">
    <location>
        <position position="826"/>
    </location>
</feature>
<feature type="modified residue" description="Phosphoserine" evidence="17 19 23 24">
    <location>
        <position position="868"/>
    </location>
</feature>
<feature type="modified residue" description="Phosphoserine" evidence="24">
    <location>
        <position position="917"/>
    </location>
</feature>
<feature type="modified residue" description="Phosphoserine" evidence="24">
    <location>
        <position position="919"/>
    </location>
</feature>
<feature type="modified residue" description="Phosphoserine" evidence="24">
    <location>
        <position position="932"/>
    </location>
</feature>
<feature type="modified residue" description="N6-acetyllysine" evidence="20">
    <location>
        <position position="962"/>
    </location>
</feature>
<feature type="modified residue" description="Phosphoserine" evidence="23">
    <location>
        <position position="984"/>
    </location>
</feature>
<feature type="modified residue" description="Phosphoserine" evidence="24">
    <location>
        <position position="1041"/>
    </location>
</feature>
<feature type="modified residue" description="Phosphoserine" evidence="19">
    <location>
        <position position="1090"/>
    </location>
</feature>
<feature type="cross-link" description="Glycyl lysine isopeptide (Lys-Gly) (interchain with G-Cter in SUMO2)" evidence="27">
    <location>
        <position position="397"/>
    </location>
</feature>
<feature type="cross-link" description="Glycyl lysine isopeptide (Lys-Gly) (interchain with G-Cter in SUMO1); alternate" evidence="25">
    <location>
        <position position="1127"/>
    </location>
</feature>
<feature type="cross-link" description="Glycyl lysine isopeptide (Lys-Gly) (interchain with G-Cter in SUMO2); alternate" evidence="26 27">
    <location>
        <position position="1127"/>
    </location>
</feature>
<feature type="splice variant" id="VSP_054775" description="In isoform 2." evidence="10">
    <location>
        <begin position="1"/>
        <end position="123"/>
    </location>
</feature>
<feature type="sequence variant" id="VAR_053422" description="In dbSNP:rs8020032.">
    <original>F</original>
    <variation>L</variation>
    <location>
        <position position="338"/>
    </location>
</feature>
<feature type="sequence variant" id="VAR_053423" description="In dbSNP:rs17128116.">
    <original>L</original>
    <variation>P</variation>
    <location>
        <position position="411"/>
    </location>
</feature>
<feature type="sequence variant" id="VAR_062100" description="In dbSNP:rs41309252.">
    <original>E</original>
    <variation>K</variation>
    <location>
        <position position="1102"/>
    </location>
</feature>
<feature type="sequence conflict" description="In Ref. 3; AAH43349/AAH00622." evidence="10" ref="3">
    <original>Q</original>
    <variation>K</variation>
    <location>
        <position position="612"/>
    </location>
</feature>
<feature type="sequence conflict" description="In Ref. 3; AAH00622." evidence="10" ref="3">
    <original>I</original>
    <variation>K</variation>
    <location>
        <position position="613"/>
    </location>
</feature>
<feature type="strand" evidence="29">
    <location>
        <begin position="12"/>
        <end position="15"/>
    </location>
</feature>
<feature type="strand" evidence="29">
    <location>
        <begin position="18"/>
        <end position="21"/>
    </location>
</feature>
<feature type="strand" evidence="29">
    <location>
        <begin position="28"/>
        <end position="31"/>
    </location>
</feature>
<feature type="strand" evidence="29">
    <location>
        <begin position="35"/>
        <end position="42"/>
    </location>
</feature>
<feature type="strand" evidence="29">
    <location>
        <begin position="49"/>
        <end position="52"/>
    </location>
</feature>
<feature type="strand" evidence="29">
    <location>
        <begin position="57"/>
        <end position="63"/>
    </location>
</feature>
<feature type="strand" evidence="29">
    <location>
        <begin position="66"/>
        <end position="71"/>
    </location>
</feature>
<feature type="turn" evidence="29">
    <location>
        <begin position="72"/>
        <end position="74"/>
    </location>
</feature>
<feature type="strand" evidence="29">
    <location>
        <begin position="75"/>
        <end position="80"/>
    </location>
</feature>
<feature type="turn" evidence="29">
    <location>
        <begin position="81"/>
        <end position="83"/>
    </location>
</feature>
<feature type="strand" evidence="29">
    <location>
        <begin position="86"/>
        <end position="92"/>
    </location>
</feature>
<feature type="strand" evidence="29">
    <location>
        <begin position="97"/>
        <end position="102"/>
    </location>
</feature>
<feature type="strand" evidence="29">
    <location>
        <begin position="106"/>
        <end position="113"/>
    </location>
</feature>
<feature type="strand" evidence="29">
    <location>
        <begin position="118"/>
        <end position="122"/>
    </location>
</feature>
<feature type="strand" evidence="29">
    <location>
        <begin position="125"/>
        <end position="132"/>
    </location>
</feature>
<feature type="strand" evidence="29">
    <location>
        <begin position="139"/>
        <end position="144"/>
    </location>
</feature>
<feature type="strand" evidence="29">
    <location>
        <begin position="148"/>
        <end position="155"/>
    </location>
</feature>
<feature type="strand" evidence="29">
    <location>
        <begin position="160"/>
        <end position="164"/>
    </location>
</feature>
<feature type="turn" evidence="29">
    <location>
        <begin position="165"/>
        <end position="168"/>
    </location>
</feature>
<feature type="strand" evidence="29">
    <location>
        <begin position="169"/>
        <end position="174"/>
    </location>
</feature>
<feature type="helix" evidence="29">
    <location>
        <begin position="183"/>
        <end position="185"/>
    </location>
</feature>
<feature type="strand" evidence="29">
    <location>
        <begin position="196"/>
        <end position="198"/>
    </location>
</feature>
<feature type="strand" evidence="29">
    <location>
        <begin position="201"/>
        <end position="206"/>
    </location>
</feature>
<feature type="strand" evidence="29">
    <location>
        <begin position="209"/>
        <end position="214"/>
    </location>
</feature>
<feature type="turn" evidence="29">
    <location>
        <begin position="215"/>
        <end position="217"/>
    </location>
</feature>
<feature type="strand" evidence="29">
    <location>
        <begin position="220"/>
        <end position="224"/>
    </location>
</feature>
<feature type="strand" evidence="29">
    <location>
        <begin position="233"/>
        <end position="238"/>
    </location>
</feature>
<feature type="strand" evidence="29">
    <location>
        <begin position="242"/>
        <end position="249"/>
    </location>
</feature>
<feature type="strand" evidence="29">
    <location>
        <begin position="254"/>
        <end position="258"/>
    </location>
</feature>
<feature type="turn" evidence="29">
    <location>
        <begin position="259"/>
        <end position="261"/>
    </location>
</feature>
<feature type="strand" evidence="29">
    <location>
        <begin position="264"/>
        <end position="268"/>
    </location>
</feature>
<feature type="strand" evidence="29">
    <location>
        <begin position="276"/>
        <end position="281"/>
    </location>
</feature>
<feature type="strand" evidence="29">
    <location>
        <begin position="283"/>
        <end position="292"/>
    </location>
</feature>
<feature type="strand" evidence="29">
    <location>
        <begin position="295"/>
        <end position="302"/>
    </location>
</feature>
<feature type="strand" evidence="30">
    <location>
        <begin position="442"/>
        <end position="449"/>
    </location>
</feature>
<feature type="strand" evidence="30">
    <location>
        <begin position="451"/>
        <end position="459"/>
    </location>
</feature>
<feature type="strand" evidence="30">
    <location>
        <begin position="464"/>
        <end position="472"/>
    </location>
</feature>
<feature type="turn" evidence="30">
    <location>
        <begin position="473"/>
        <end position="475"/>
    </location>
</feature>
<feature type="strand" evidence="30">
    <location>
        <begin position="479"/>
        <end position="482"/>
    </location>
</feature>
<feature type="strand" evidence="30">
    <location>
        <begin position="489"/>
        <end position="492"/>
    </location>
</feature>
<feature type="strand" evidence="30">
    <location>
        <begin position="497"/>
        <end position="501"/>
    </location>
</feature>
<feature type="strand" evidence="30">
    <location>
        <begin position="505"/>
        <end position="507"/>
    </location>
</feature>
<feature type="strand" evidence="30">
    <location>
        <begin position="510"/>
        <end position="514"/>
    </location>
</feature>
<feature type="strand" evidence="30">
    <location>
        <begin position="519"/>
        <end position="521"/>
    </location>
</feature>
<feature type="strand" evidence="30">
    <location>
        <begin position="525"/>
        <end position="528"/>
    </location>
</feature>
<feature type="strand" evidence="30">
    <location>
        <begin position="535"/>
        <end position="540"/>
    </location>
</feature>
<feature type="strand" evidence="30">
    <location>
        <begin position="542"/>
        <end position="549"/>
    </location>
</feature>
<feature type="strand" evidence="30">
    <location>
        <begin position="552"/>
        <end position="558"/>
    </location>
</feature>
<feature type="strand" evidence="30">
    <location>
        <begin position="563"/>
        <end position="568"/>
    </location>
</feature>
<feature type="strand" evidence="30">
    <location>
        <begin position="573"/>
        <end position="579"/>
    </location>
</feature>
<feature type="strand" evidence="30">
    <location>
        <begin position="582"/>
        <end position="588"/>
    </location>
</feature>
<feature type="strand" evidence="30">
    <location>
        <begin position="599"/>
        <end position="605"/>
    </location>
</feature>
<feature type="strand" evidence="30">
    <location>
        <begin position="607"/>
        <end position="609"/>
    </location>
</feature>
<feature type="strand" evidence="30">
    <location>
        <begin position="611"/>
        <end position="618"/>
    </location>
</feature>
<feature type="strand" evidence="30">
    <location>
        <begin position="627"/>
        <end position="632"/>
    </location>
</feature>
<feature type="strand" evidence="30">
    <location>
        <begin position="638"/>
        <end position="642"/>
    </location>
</feature>
<feature type="strand" evidence="30">
    <location>
        <begin position="645"/>
        <end position="650"/>
    </location>
</feature>
<feature type="helix" evidence="30">
    <location>
        <begin position="652"/>
        <end position="654"/>
    </location>
</feature>
<feature type="strand" evidence="30">
    <location>
        <begin position="658"/>
        <end position="663"/>
    </location>
</feature>
<feature type="helix" evidence="30">
    <location>
        <begin position="664"/>
        <end position="667"/>
    </location>
</feature>
<feature type="strand" evidence="30">
    <location>
        <begin position="673"/>
        <end position="681"/>
    </location>
</feature>
<feature type="turn" evidence="30">
    <location>
        <begin position="682"/>
        <end position="685"/>
    </location>
</feature>
<feature type="strand" evidence="30">
    <location>
        <begin position="686"/>
        <end position="697"/>
    </location>
</feature>
<feature type="strand" evidence="30">
    <location>
        <begin position="700"/>
        <end position="702"/>
    </location>
</feature>
<feature type="strand" evidence="30">
    <location>
        <begin position="707"/>
        <end position="709"/>
    </location>
</feature>
<feature type="turn" evidence="30">
    <location>
        <begin position="716"/>
        <end position="719"/>
    </location>
</feature>
<feature type="helix" evidence="30">
    <location>
        <begin position="721"/>
        <end position="734"/>
    </location>
</feature>
<feature type="helix" evidence="30">
    <location>
        <begin position="737"/>
        <end position="744"/>
    </location>
</feature>
<feature type="helix" evidence="30">
    <location>
        <begin position="751"/>
        <end position="774"/>
    </location>
</feature>
<feature type="helix" evidence="30">
    <location>
        <begin position="778"/>
        <end position="786"/>
    </location>
</feature>
<feature type="helix" evidence="30">
    <location>
        <begin position="790"/>
        <end position="801"/>
    </location>
</feature>
<feature type="helix" evidence="30">
    <location>
        <begin position="802"/>
        <end position="804"/>
    </location>
</feature>
<feature type="helix" evidence="30">
    <location>
        <begin position="806"/>
        <end position="821"/>
    </location>
</feature>
<feature type="helix" evidence="28">
    <location>
        <begin position="1021"/>
        <end position="1036"/>
    </location>
</feature>
<feature type="helix" evidence="28">
    <location>
        <begin position="1043"/>
        <end position="1054"/>
    </location>
</feature>
<feature type="strand" evidence="28">
    <location>
        <begin position="1055"/>
        <end position="1057"/>
    </location>
</feature>
<feature type="helix" evidence="28">
    <location>
        <begin position="1059"/>
        <end position="1068"/>
    </location>
</feature>
<feature type="strand" evidence="28">
    <location>
        <begin position="1071"/>
        <end position="1076"/>
    </location>
</feature>
<feature type="helix" evidence="28">
    <location>
        <begin position="1081"/>
        <end position="1083"/>
    </location>
</feature>
<dbReference type="EMBL" id="AJ006266">
    <property type="protein sequence ID" value="CAA06932.1"/>
    <property type="molecule type" value="mRNA"/>
</dbReference>
<dbReference type="EMBL" id="AL160471">
    <property type="status" value="NOT_ANNOTATED_CDS"/>
    <property type="molecule type" value="Genomic_DNA"/>
</dbReference>
<dbReference type="EMBL" id="BC000622">
    <property type="protein sequence ID" value="AAH00622.1"/>
    <property type="molecule type" value="mRNA"/>
</dbReference>
<dbReference type="EMBL" id="BC043349">
    <property type="protein sequence ID" value="AAH43349.1"/>
    <property type="molecule type" value="mRNA"/>
</dbReference>
<dbReference type="EMBL" id="BC063041">
    <property type="protein sequence ID" value="AAH63041.1"/>
    <property type="molecule type" value="mRNA"/>
</dbReference>
<dbReference type="CCDS" id="CCDS41955.1">
    <molecule id="O75717-2"/>
</dbReference>
<dbReference type="CCDS" id="CCDS9721.1">
    <molecule id="O75717-1"/>
</dbReference>
<dbReference type="RefSeq" id="NP_001008397.1">
    <molecule id="O75717-2"/>
    <property type="nucleotide sequence ID" value="NM_001008396.3"/>
</dbReference>
<dbReference type="RefSeq" id="NP_009017.1">
    <molecule id="O75717-1"/>
    <property type="nucleotide sequence ID" value="NM_007086.4"/>
</dbReference>
<dbReference type="PDB" id="2D7L">
    <property type="method" value="NMR"/>
    <property type="chains" value="A=1017-1084"/>
</dbReference>
<dbReference type="PDB" id="5GVA">
    <property type="method" value="X-ray"/>
    <property type="resolution" value="1.85 A"/>
    <property type="chains" value="A=1-330"/>
</dbReference>
<dbReference type="PDB" id="5GVB">
    <property type="method" value="X-ray"/>
    <property type="resolution" value="2.75 A"/>
    <property type="chains" value="A=416-850"/>
</dbReference>
<dbReference type="PDB" id="5OGS">
    <property type="method" value="X-ray"/>
    <property type="resolution" value="2.50 A"/>
    <property type="chains" value="A=329-826"/>
</dbReference>
<dbReference type="PDB" id="6XTY">
    <property type="method" value="EM"/>
    <property type="resolution" value="6.77 A"/>
    <property type="chains" value="F/G/H=1-1129"/>
</dbReference>
<dbReference type="PDB" id="7PFO">
    <property type="method" value="EM"/>
    <property type="resolution" value="3.20 A"/>
    <property type="chains" value="H/I/J=1-1129"/>
</dbReference>
<dbReference type="PDB" id="7PLO">
    <property type="method" value="EM"/>
    <property type="resolution" value="2.80 A"/>
    <property type="chains" value="H/I/J=1-1129"/>
</dbReference>
<dbReference type="PDB" id="8B9D">
    <property type="method" value="EM"/>
    <property type="resolution" value="3.40 A"/>
    <property type="chains" value="H/I/J=1-1129"/>
</dbReference>
<dbReference type="PDBsum" id="2D7L"/>
<dbReference type="PDBsum" id="5GVA"/>
<dbReference type="PDBsum" id="5GVB"/>
<dbReference type="PDBsum" id="5OGS"/>
<dbReference type="PDBsum" id="6XTY"/>
<dbReference type="PDBsum" id="7PFO"/>
<dbReference type="PDBsum" id="7PLO"/>
<dbReference type="PDBsum" id="8B9D"/>
<dbReference type="BMRB" id="O75717"/>
<dbReference type="EMDB" id="EMD-10621"/>
<dbReference type="EMDB" id="EMD-13375"/>
<dbReference type="EMDB" id="EMD-13494"/>
<dbReference type="SMR" id="O75717"/>
<dbReference type="BioGRID" id="116340">
    <property type="interactions" value="182"/>
</dbReference>
<dbReference type="CORUM" id="O75717"/>
<dbReference type="FunCoup" id="O75717">
    <property type="interactions" value="2915"/>
</dbReference>
<dbReference type="IntAct" id="O75717">
    <property type="interactions" value="68"/>
</dbReference>
<dbReference type="MINT" id="O75717"/>
<dbReference type="STRING" id="9606.ENSP00000353793"/>
<dbReference type="ChEMBL" id="CHEMBL4295681"/>
<dbReference type="GlyGen" id="O75717">
    <property type="glycosylation" value="12 sites, 1 O-linked glycan (12 sites)"/>
</dbReference>
<dbReference type="iPTMnet" id="O75717"/>
<dbReference type="MetOSite" id="O75717"/>
<dbReference type="PhosphoSitePlus" id="O75717"/>
<dbReference type="SwissPalm" id="O75717"/>
<dbReference type="BioMuta" id="WDHD1"/>
<dbReference type="jPOST" id="O75717"/>
<dbReference type="MassIVE" id="O75717"/>
<dbReference type="PaxDb" id="9606-ENSP00000353793"/>
<dbReference type="PeptideAtlas" id="O75717"/>
<dbReference type="ProteomicsDB" id="11926"/>
<dbReference type="ProteomicsDB" id="50175">
    <molecule id="O75717-1"/>
</dbReference>
<dbReference type="Pumba" id="O75717"/>
<dbReference type="Antibodypedia" id="44">
    <property type="antibodies" value="176 antibodies from 28 providers"/>
</dbReference>
<dbReference type="DNASU" id="11169"/>
<dbReference type="Ensembl" id="ENST00000360586.8">
    <molecule id="O75717-1"/>
    <property type="protein sequence ID" value="ENSP00000353793.3"/>
    <property type="gene ID" value="ENSG00000198554.12"/>
</dbReference>
<dbReference type="Ensembl" id="ENST00000420358.2">
    <molecule id="O75717-2"/>
    <property type="protein sequence ID" value="ENSP00000399349.2"/>
    <property type="gene ID" value="ENSG00000198554.12"/>
</dbReference>
<dbReference type="GeneID" id="11169"/>
<dbReference type="KEGG" id="hsa:11169"/>
<dbReference type="MANE-Select" id="ENST00000360586.8">
    <property type="protein sequence ID" value="ENSP00000353793.3"/>
    <property type="RefSeq nucleotide sequence ID" value="NM_007086.4"/>
    <property type="RefSeq protein sequence ID" value="NP_009017.1"/>
</dbReference>
<dbReference type="UCSC" id="uc001xbm.3">
    <molecule id="O75717-1"/>
    <property type="organism name" value="human"/>
</dbReference>
<dbReference type="AGR" id="HGNC:23170"/>
<dbReference type="CTD" id="11169"/>
<dbReference type="DisGeNET" id="11169"/>
<dbReference type="GeneCards" id="WDHD1"/>
<dbReference type="HGNC" id="HGNC:23170">
    <property type="gene designation" value="WDHD1"/>
</dbReference>
<dbReference type="HPA" id="ENSG00000198554">
    <property type="expression patterns" value="Tissue enhanced (lymphoid)"/>
</dbReference>
<dbReference type="MIM" id="608126">
    <property type="type" value="gene"/>
</dbReference>
<dbReference type="neXtProt" id="NX_O75717"/>
<dbReference type="OpenTargets" id="ENSG00000198554"/>
<dbReference type="PharmGKB" id="PA134988782"/>
<dbReference type="VEuPathDB" id="HostDB:ENSG00000198554"/>
<dbReference type="eggNOG" id="KOG1274">
    <property type="taxonomic scope" value="Eukaryota"/>
</dbReference>
<dbReference type="GeneTree" id="ENSGT00390000002030"/>
<dbReference type="HOGENOM" id="CLU_004219_0_0_1"/>
<dbReference type="InParanoid" id="O75717"/>
<dbReference type="OMA" id="RYAHTNG"/>
<dbReference type="OrthoDB" id="427368at2759"/>
<dbReference type="PAN-GO" id="O75717">
    <property type="GO annotations" value="5 GO annotations based on evolutionary models"/>
</dbReference>
<dbReference type="PhylomeDB" id="O75717"/>
<dbReference type="TreeFam" id="TF105988"/>
<dbReference type="PathwayCommons" id="O75717"/>
<dbReference type="SignaLink" id="O75717"/>
<dbReference type="SIGNOR" id="O75717"/>
<dbReference type="BioGRID-ORCS" id="11169">
    <property type="hits" value="763 hits in 1168 CRISPR screens"/>
</dbReference>
<dbReference type="ChiTaRS" id="WDHD1">
    <property type="organism name" value="human"/>
</dbReference>
<dbReference type="EvolutionaryTrace" id="O75717"/>
<dbReference type="GeneWiki" id="WDHD1"/>
<dbReference type="GenomeRNAi" id="11169"/>
<dbReference type="Pharos" id="O75717">
    <property type="development level" value="Tbio"/>
</dbReference>
<dbReference type="PRO" id="PR:O75717"/>
<dbReference type="Proteomes" id="UP000005640">
    <property type="component" value="Chromosome 14"/>
</dbReference>
<dbReference type="RNAct" id="O75717">
    <property type="molecule type" value="protein"/>
</dbReference>
<dbReference type="Bgee" id="ENSG00000198554">
    <property type="expression patterns" value="Expressed in primordial germ cell in gonad and 116 other cell types or tissues"/>
</dbReference>
<dbReference type="ExpressionAtlas" id="O75717">
    <property type="expression patterns" value="baseline and differential"/>
</dbReference>
<dbReference type="GO" id="GO:0005737">
    <property type="term" value="C:cytoplasm"/>
    <property type="evidence" value="ECO:0000304"/>
    <property type="project" value="ProtInc"/>
</dbReference>
<dbReference type="GO" id="GO:0043596">
    <property type="term" value="C:nuclear replication fork"/>
    <property type="evidence" value="ECO:0000318"/>
    <property type="project" value="GO_Central"/>
</dbReference>
<dbReference type="GO" id="GO:0005654">
    <property type="term" value="C:nucleoplasm"/>
    <property type="evidence" value="ECO:0000314"/>
    <property type="project" value="HPA"/>
</dbReference>
<dbReference type="GO" id="GO:0003682">
    <property type="term" value="F:chromatin binding"/>
    <property type="evidence" value="ECO:0000318"/>
    <property type="project" value="GO_Central"/>
</dbReference>
<dbReference type="GO" id="GO:0003677">
    <property type="term" value="F:DNA binding"/>
    <property type="evidence" value="ECO:0000304"/>
    <property type="project" value="ProtInc"/>
</dbReference>
<dbReference type="GO" id="GO:0006281">
    <property type="term" value="P:DNA repair"/>
    <property type="evidence" value="ECO:0000318"/>
    <property type="project" value="GO_Central"/>
</dbReference>
<dbReference type="GO" id="GO:0006261">
    <property type="term" value="P:DNA-templated DNA replication"/>
    <property type="evidence" value="ECO:0000318"/>
    <property type="project" value="GO_Central"/>
</dbReference>
<dbReference type="GO" id="GO:0000278">
    <property type="term" value="P:mitotic cell cycle"/>
    <property type="evidence" value="ECO:0000318"/>
    <property type="project" value="GO_Central"/>
</dbReference>
<dbReference type="CDD" id="cd21993">
    <property type="entry name" value="HMG-box_WDHD1"/>
    <property type="match status" value="1"/>
</dbReference>
<dbReference type="CDD" id="cd00200">
    <property type="entry name" value="WD40"/>
    <property type="match status" value="1"/>
</dbReference>
<dbReference type="FunFam" id="2.130.10.10:FF:000338">
    <property type="entry name" value="WD repeat and HMG-box DNA binding protein 1"/>
    <property type="match status" value="1"/>
</dbReference>
<dbReference type="FunFam" id="2.130.10.10:FF:001059">
    <property type="entry name" value="WD repeat and HMG-box DNA binding protein 1"/>
    <property type="match status" value="1"/>
</dbReference>
<dbReference type="FunFam" id="1.10.30.10:FF:000028">
    <property type="entry name" value="WD repeat and HMG-box DNA-binding protein 1"/>
    <property type="match status" value="1"/>
</dbReference>
<dbReference type="Gene3D" id="1.10.30.10">
    <property type="entry name" value="High mobility group box domain"/>
    <property type="match status" value="1"/>
</dbReference>
<dbReference type="Gene3D" id="2.130.10.10">
    <property type="entry name" value="YVTN repeat-like/Quinoprotein amine dehydrogenase"/>
    <property type="match status" value="3"/>
</dbReference>
<dbReference type="InterPro" id="IPR055339">
    <property type="entry name" value="HMG-box_WDHD1"/>
</dbReference>
<dbReference type="InterPro" id="IPR009071">
    <property type="entry name" value="HMG_box_dom"/>
</dbReference>
<dbReference type="InterPro" id="IPR036910">
    <property type="entry name" value="HMG_box_dom_sf"/>
</dbReference>
<dbReference type="InterPro" id="IPR015943">
    <property type="entry name" value="WD40/YVTN_repeat-like_dom_sf"/>
</dbReference>
<dbReference type="InterPro" id="IPR019775">
    <property type="entry name" value="WD40_repeat_CS"/>
</dbReference>
<dbReference type="InterPro" id="IPR036322">
    <property type="entry name" value="WD40_repeat_dom_sf"/>
</dbReference>
<dbReference type="InterPro" id="IPR001680">
    <property type="entry name" value="WD40_rpt"/>
</dbReference>
<dbReference type="InterPro" id="IPR022100">
    <property type="entry name" value="WDHD1/CFT4_beta-prop_2nd"/>
</dbReference>
<dbReference type="InterPro" id="IPR048591">
    <property type="entry name" value="WDHD1/CFT4_hel"/>
</dbReference>
<dbReference type="PANTHER" id="PTHR19932">
    <property type="entry name" value="WD REPEAT AND HMG-BOX DNA BINDING PROTEIN"/>
    <property type="match status" value="1"/>
</dbReference>
<dbReference type="PANTHER" id="PTHR19932:SF10">
    <property type="entry name" value="WD REPEAT AND HMG-BOX DNA-BINDING PROTEIN 1"/>
    <property type="match status" value="1"/>
</dbReference>
<dbReference type="Pfam" id="PF20946">
    <property type="entry name" value="Ctf4_C"/>
    <property type="match status" value="1"/>
</dbReference>
<dbReference type="Pfam" id="PF24815">
    <property type="entry name" value="HMG_WDHD1"/>
    <property type="match status" value="1"/>
</dbReference>
<dbReference type="Pfam" id="PF12341">
    <property type="entry name" value="Mcl1_mid"/>
    <property type="match status" value="1"/>
</dbReference>
<dbReference type="Pfam" id="PF24817">
    <property type="entry name" value="WD40_WDHD1_1st"/>
    <property type="match status" value="1"/>
</dbReference>
<dbReference type="SMART" id="SM00398">
    <property type="entry name" value="HMG"/>
    <property type="match status" value="1"/>
</dbReference>
<dbReference type="SMART" id="SM00320">
    <property type="entry name" value="WD40"/>
    <property type="match status" value="5"/>
</dbReference>
<dbReference type="SUPFAM" id="SSF47095">
    <property type="entry name" value="HMG-box"/>
    <property type="match status" value="1"/>
</dbReference>
<dbReference type="SUPFAM" id="SSF50978">
    <property type="entry name" value="WD40 repeat-like"/>
    <property type="match status" value="1"/>
</dbReference>
<dbReference type="PROSITE" id="PS50118">
    <property type="entry name" value="HMG_BOX_2"/>
    <property type="match status" value="1"/>
</dbReference>
<dbReference type="PROSITE" id="PS00678">
    <property type="entry name" value="WD_REPEATS_1"/>
    <property type="match status" value="1"/>
</dbReference>
<dbReference type="PROSITE" id="PS50082">
    <property type="entry name" value="WD_REPEATS_2"/>
    <property type="match status" value="3"/>
</dbReference>
<dbReference type="PROSITE" id="PS50294">
    <property type="entry name" value="WD_REPEATS_REGION"/>
    <property type="match status" value="1"/>
</dbReference>
<name>WDHD1_HUMAN</name>
<accession>O75717</accession>
<accession>C9JW18</accession>
<accession>F6W0U7</accession>
<sequence>MPATRKPMRYGHTEGHTEVCFDDSGSFIVTCGSDGDVRIWEDLDDDDPKFINVGEKAYSCALKSGKLVTAVSNNTIQVHTFPEGVPDGILTRFTTNANHVVFNGDGTKIAAGSSDFLVKIVDVMDSSQQKTFRGHDAPVLSLSFDPKDIFLASASCDGSVRVWQISDQTCAISWPLLQKCNDVINAKSICRLAWQPKSGKLLAIPVEKSVKLYRRESWSHQFDLSDNFISQTLNIVTWSPCGQYLAAGSINGLIIVWNVETKDCMERVKHEKGYAICGLAWHPTCGRISYTDAEGNLGLLENVCDPSGKTSSSKVSSRVEKDYNDLFDGDDMSNAGDFLNDNAVEIPSFSKGIINDDEDDEDLMMASGRPRQRSHILEDDENSVDISMLKTGSSLLKEEEEDGQEGSIHNLPLVTSQRPFYDGPMPTPRQKPFQSGSTPLHLTHRFMVWNSIGIIRCYNDEQDNAIDVEFHDTSIHHATHLSNTLNYTIADLSHEAILLACESTDELASKLHCLHFSSWDSSKEWIIDLPQNEDIEAICLGQGWAAAATSALLLRLFTIGGVQKEVFSLAGPVVSMAGHGEQLFIVYHRGTGFDGDQCLGVQLLELGKKKKQILHGDPLPLTRKSYLAWIGFSAEGTPCYVDSEGIVRMLNRGLGNTWTPICNTREHCKGKSDHYWVVGIHENPQQLRCIPCKGSRFPPTLPRPAVAILSFKLPYCQIATEKGQMEEQFWRSVIFHNHLDYLAKNGYEYEESTKNQATKEQQELLMKMLALSCKLEREFRCVELADLMTQNAVNLAIKYASRSRKLILAQKLSELAVEKAAELTATQVEEEEEEEDFRKKLNAGYSNTATEWSQPRFRNQVEEDAEDSGEADDEEKPEIHKPGQNSFSKSTNSSDVSAKSGAVTFSSQGRVNPFKVSASSKEPAMSMNSARSTNILDNMGKSSKKSTALSRTTNNEKSPIIKPLIPKPKPKQASAASYFQKRNSQTNKTEEVKEENLKNVLSETPAICPPQNTENQRPKTGFQMWLEENRSNILSDNPDFSDEADIIKEGMIRFRVLSTEERKVWANKAKGETASEGTEAKKRKRVVDESDETENQEEKAKENLNLSKKQKPLDFSTNQKLSAFAFKQE</sequence>
<gene>
    <name evidence="13" type="primary">WDHD1</name>
    <name type="synonym">AND1</name>
</gene>
<organism>
    <name type="scientific">Homo sapiens</name>
    <name type="common">Human</name>
    <dbReference type="NCBI Taxonomy" id="9606"/>
    <lineage>
        <taxon>Eukaryota</taxon>
        <taxon>Metazoa</taxon>
        <taxon>Chordata</taxon>
        <taxon>Craniata</taxon>
        <taxon>Vertebrata</taxon>
        <taxon>Euteleostomi</taxon>
        <taxon>Mammalia</taxon>
        <taxon>Eutheria</taxon>
        <taxon>Euarchontoglires</taxon>
        <taxon>Primates</taxon>
        <taxon>Haplorrhini</taxon>
        <taxon>Catarrhini</taxon>
        <taxon>Hominidae</taxon>
        <taxon>Homo</taxon>
    </lineage>
</organism>
<reference key="1">
    <citation type="submission" date="1998-05" db="EMBL/GenBank/DDBJ databases">
        <authorList>
            <person name="Koehler A."/>
        </authorList>
    </citation>
    <scope>NUCLEOTIDE SEQUENCE [MRNA] (ISOFORM 1)</scope>
    <source>
        <tissue>Fetal brain</tissue>
    </source>
</reference>
<reference key="2">
    <citation type="journal article" date="2003" name="Nature">
        <title>The DNA sequence and analysis of human chromosome 14.</title>
        <authorList>
            <person name="Heilig R."/>
            <person name="Eckenberg R."/>
            <person name="Petit J.-L."/>
            <person name="Fonknechten N."/>
            <person name="Da Silva C."/>
            <person name="Cattolico L."/>
            <person name="Levy M."/>
            <person name="Barbe V."/>
            <person name="De Berardinis V."/>
            <person name="Ureta-Vidal A."/>
            <person name="Pelletier E."/>
            <person name="Vico V."/>
            <person name="Anthouard V."/>
            <person name="Rowen L."/>
            <person name="Madan A."/>
            <person name="Qin S."/>
            <person name="Sun H."/>
            <person name="Du H."/>
            <person name="Pepin K."/>
            <person name="Artiguenave F."/>
            <person name="Robert C."/>
            <person name="Cruaud C."/>
            <person name="Bruels T."/>
            <person name="Jaillon O."/>
            <person name="Friedlander L."/>
            <person name="Samson G."/>
            <person name="Brottier P."/>
            <person name="Cure S."/>
            <person name="Segurens B."/>
            <person name="Aniere F."/>
            <person name="Samain S."/>
            <person name="Crespeau H."/>
            <person name="Abbasi N."/>
            <person name="Aiach N."/>
            <person name="Boscus D."/>
            <person name="Dickhoff R."/>
            <person name="Dors M."/>
            <person name="Dubois I."/>
            <person name="Friedman C."/>
            <person name="Gouyvenoux M."/>
            <person name="James R."/>
            <person name="Madan A."/>
            <person name="Mairey-Estrada B."/>
            <person name="Mangenot S."/>
            <person name="Martins N."/>
            <person name="Menard M."/>
            <person name="Oztas S."/>
            <person name="Ratcliffe A."/>
            <person name="Shaffer T."/>
            <person name="Trask B."/>
            <person name="Vacherie B."/>
            <person name="Bellemere C."/>
            <person name="Belser C."/>
            <person name="Besnard-Gonnet M."/>
            <person name="Bartol-Mavel D."/>
            <person name="Boutard M."/>
            <person name="Briez-Silla S."/>
            <person name="Combette S."/>
            <person name="Dufosse-Laurent V."/>
            <person name="Ferron C."/>
            <person name="Lechaplais C."/>
            <person name="Louesse C."/>
            <person name="Muselet D."/>
            <person name="Magdelenat G."/>
            <person name="Pateau E."/>
            <person name="Petit E."/>
            <person name="Sirvain-Trukniewicz P."/>
            <person name="Trybou A."/>
            <person name="Vega-Czarny N."/>
            <person name="Bataille E."/>
            <person name="Bluet E."/>
            <person name="Bordelais I."/>
            <person name="Dubois M."/>
            <person name="Dumont C."/>
            <person name="Guerin T."/>
            <person name="Haffray S."/>
            <person name="Hammadi R."/>
            <person name="Muanga J."/>
            <person name="Pellouin V."/>
            <person name="Robert D."/>
            <person name="Wunderle E."/>
            <person name="Gauguet G."/>
            <person name="Roy A."/>
            <person name="Sainte-Marthe L."/>
            <person name="Verdier J."/>
            <person name="Verdier-Discala C."/>
            <person name="Hillier L.W."/>
            <person name="Fulton L."/>
            <person name="McPherson J."/>
            <person name="Matsuda F."/>
            <person name="Wilson R."/>
            <person name="Scarpelli C."/>
            <person name="Gyapay G."/>
            <person name="Wincker P."/>
            <person name="Saurin W."/>
            <person name="Quetier F."/>
            <person name="Waterston R."/>
            <person name="Hood L."/>
            <person name="Weissenbach J."/>
        </authorList>
    </citation>
    <scope>NUCLEOTIDE SEQUENCE [LARGE SCALE GENOMIC DNA]</scope>
</reference>
<reference key="3">
    <citation type="journal article" date="2004" name="Genome Res.">
        <title>The status, quality, and expansion of the NIH full-length cDNA project: the Mammalian Gene Collection (MGC).</title>
        <authorList>
            <consortium name="The MGC Project Team"/>
        </authorList>
    </citation>
    <scope>NUCLEOTIDE SEQUENCE [LARGE SCALE MRNA] (ISOFORM 1)</scope>
    <source>
        <tissue>Liver</tissue>
        <tissue>Skin</tissue>
        <tissue>Uterus</tissue>
    </source>
</reference>
<reference key="4">
    <citation type="journal article" date="2006" name="Cell">
        <title>Global, in vivo, and site-specific phosphorylation dynamics in signaling networks.</title>
        <authorList>
            <person name="Olsen J.V."/>
            <person name="Blagoev B."/>
            <person name="Gnad F."/>
            <person name="Macek B."/>
            <person name="Kumar C."/>
            <person name="Mortensen P."/>
            <person name="Mann M."/>
        </authorList>
    </citation>
    <scope>PHOSPHORYLATION [LARGE SCALE ANALYSIS] AT SER-374; SER-383 AND SER-868</scope>
    <scope>IDENTIFICATION BY MASS SPECTROMETRY [LARGE SCALE ANALYSIS]</scope>
    <source>
        <tissue>Cervix carcinoma</tissue>
    </source>
</reference>
<reference key="5">
    <citation type="journal article" date="2007" name="Genes Dev.">
        <title>Mcm10 and And-1/CTF4 recruit DNA polymerase alpha to chromatin for initiation of DNA replication.</title>
        <authorList>
            <person name="Zhu W."/>
            <person name="Ukomadu C."/>
            <person name="Jha S."/>
            <person name="Senga T."/>
            <person name="Dhar S.K."/>
            <person name="Wohlschlegel J.A."/>
            <person name="Nutt L.K."/>
            <person name="Kornbluth S."/>
            <person name="Dutta A."/>
        </authorList>
    </citation>
    <scope>INTERACTION WITH POLA1 AND MCM10</scope>
</reference>
<reference key="6">
    <citation type="journal article" date="2007" name="Science">
        <title>ATM and ATR substrate analysis reveals extensive protein networks responsive to DNA damage.</title>
        <authorList>
            <person name="Matsuoka S."/>
            <person name="Ballif B.A."/>
            <person name="Smogorzewska A."/>
            <person name="McDonald E.R. III"/>
            <person name="Hurov K.E."/>
            <person name="Luo J."/>
            <person name="Bakalarski C.E."/>
            <person name="Zhao Z."/>
            <person name="Solimini N."/>
            <person name="Lerenthal Y."/>
            <person name="Shiloh Y."/>
            <person name="Gygi S.P."/>
            <person name="Elledge S.J."/>
        </authorList>
    </citation>
    <scope>PHOSPHORYLATION [LARGE SCALE ANALYSIS] AT THR-824</scope>
    <scope>IDENTIFICATION BY MASS SPECTROMETRY [LARGE SCALE ANALYSIS]</scope>
    <source>
        <tissue>Embryonic kidney</tissue>
    </source>
</reference>
<reference key="7">
    <citation type="journal article" date="2008" name="Proc. Natl. Acad. Sci. U.S.A.">
        <title>A quantitative atlas of mitotic phosphorylation.</title>
        <authorList>
            <person name="Dephoure N."/>
            <person name="Zhou C."/>
            <person name="Villen J."/>
            <person name="Beausoleil S.A."/>
            <person name="Bakalarski C.E."/>
            <person name="Elledge S.J."/>
            <person name="Gygi S.P."/>
        </authorList>
    </citation>
    <scope>PHOSPHORYLATION [LARGE SCALE ANALYSIS] AT SER-333; SER-383; SER-387; SER-868 AND SER-1090</scope>
    <scope>IDENTIFICATION BY MASS SPECTROMETRY [LARGE SCALE ANALYSIS]</scope>
    <source>
        <tissue>Cervix carcinoma</tissue>
    </source>
</reference>
<reference key="8">
    <citation type="journal article" date="2009" name="Proc. Natl. Acad. Sci. U.S.A.">
        <title>Assembly of the Cdc45-Mcm2-7-GINS complex in human cells requires the Ctf4/And-1, RecQL4, and Mcm10 proteins.</title>
        <authorList>
            <person name="Im J.S."/>
            <person name="Ki S.H."/>
            <person name="Farina A."/>
            <person name="Jung D.S."/>
            <person name="Hurwitz J."/>
            <person name="Lee J.K."/>
        </authorList>
    </citation>
    <scope>FUNCTION</scope>
</reference>
<reference key="9">
    <citation type="journal article" date="2009" name="Sci. Signal.">
        <title>Quantitative phosphoproteomic analysis of T cell receptor signaling reveals system-wide modulation of protein-protein interactions.</title>
        <authorList>
            <person name="Mayya V."/>
            <person name="Lundgren D.H."/>
            <person name="Hwang S.-I."/>
            <person name="Rezaul K."/>
            <person name="Wu L."/>
            <person name="Eng J.K."/>
            <person name="Rodionov V."/>
            <person name="Han D.K."/>
        </authorList>
    </citation>
    <scope>PHOSPHORYLATION [LARGE SCALE ANALYSIS] AT SER-333; SER-374 AND SER-383</scope>
    <scope>IDENTIFICATION BY MASS SPECTROMETRY [LARGE SCALE ANALYSIS]</scope>
    <source>
        <tissue>Leukemic T-cell</tissue>
    </source>
</reference>
<reference key="10">
    <citation type="journal article" date="2009" name="Science">
        <title>Lysine acetylation targets protein complexes and co-regulates major cellular functions.</title>
        <authorList>
            <person name="Choudhary C."/>
            <person name="Kumar C."/>
            <person name="Gnad F."/>
            <person name="Nielsen M.L."/>
            <person name="Rehman M."/>
            <person name="Walther T.C."/>
            <person name="Olsen J.V."/>
            <person name="Mann M."/>
        </authorList>
    </citation>
    <scope>ACETYLATION [LARGE SCALE ANALYSIS] AT LYS-962</scope>
    <scope>IDENTIFICATION BY MASS SPECTROMETRY [LARGE SCALE ANALYSIS]</scope>
</reference>
<reference key="11">
    <citation type="journal article" date="2010" name="Sci. Signal.">
        <title>Quantitative phosphoproteomics reveals widespread full phosphorylation site occupancy during mitosis.</title>
        <authorList>
            <person name="Olsen J.V."/>
            <person name="Vermeulen M."/>
            <person name="Santamaria A."/>
            <person name="Kumar C."/>
            <person name="Miller M.L."/>
            <person name="Jensen L.J."/>
            <person name="Gnad F."/>
            <person name="Cox J."/>
            <person name="Jensen T.S."/>
            <person name="Nigg E.A."/>
            <person name="Brunak S."/>
            <person name="Mann M."/>
        </authorList>
    </citation>
    <scope>PHOSPHORYLATION [LARGE SCALE ANALYSIS] AT SER-333; SER-383 AND SER-387</scope>
    <scope>IDENTIFICATION BY MASS SPECTROMETRY [LARGE SCALE ANALYSIS]</scope>
    <source>
        <tissue>Cervix carcinoma</tissue>
    </source>
</reference>
<reference key="12">
    <citation type="journal article" date="2011" name="BMC Syst. Biol.">
        <title>Initial characterization of the human central proteome.</title>
        <authorList>
            <person name="Burkard T.R."/>
            <person name="Planyavsky M."/>
            <person name="Kaupe I."/>
            <person name="Breitwieser F.P."/>
            <person name="Buerckstuemmer T."/>
            <person name="Bennett K.L."/>
            <person name="Superti-Furga G."/>
            <person name="Colinge J."/>
        </authorList>
    </citation>
    <scope>IDENTIFICATION BY MASS SPECTROMETRY [LARGE SCALE ANALYSIS]</scope>
</reference>
<reference key="13">
    <citation type="journal article" date="2011" name="Sci. Signal.">
        <title>System-wide temporal characterization of the proteome and phosphoproteome of human embryonic stem cell differentiation.</title>
        <authorList>
            <person name="Rigbolt K.T."/>
            <person name="Prokhorova T.A."/>
            <person name="Akimov V."/>
            <person name="Henningsen J."/>
            <person name="Johansen P.T."/>
            <person name="Kratchmarova I."/>
            <person name="Kassem M."/>
            <person name="Mann M."/>
            <person name="Olsen J.V."/>
            <person name="Blagoev B."/>
        </authorList>
    </citation>
    <scope>PHOSPHORYLATION [LARGE SCALE ANALYSIS] AT SER-383; SER-868 AND SER-984</scope>
    <scope>IDENTIFICATION BY MASS SPECTROMETRY [LARGE SCALE ANALYSIS]</scope>
</reference>
<reference key="14">
    <citation type="journal article" date="2012" name="J. Biol. Chem.">
        <title>Okazaki fragment processing-independent role for human Dna2 enzyme during DNA replication.</title>
        <authorList>
            <person name="Duxin J.P."/>
            <person name="Moore H.R."/>
            <person name="Sidorova J."/>
            <person name="Karanja K."/>
            <person name="Honaker Y."/>
            <person name="Dao B."/>
            <person name="Piwnica-Worms H."/>
            <person name="Campbell J.L."/>
            <person name="Monnat R.J. Jr."/>
            <person name="Stewart S.A."/>
        </authorList>
    </citation>
    <scope>INTERACTION WITH DNA2</scope>
</reference>
<reference key="15">
    <citation type="journal article" date="2013" name="J. Proteome Res.">
        <title>Toward a comprehensive characterization of a human cancer cell phosphoproteome.</title>
        <authorList>
            <person name="Zhou H."/>
            <person name="Di Palma S."/>
            <person name="Preisinger C."/>
            <person name="Peng M."/>
            <person name="Polat A.N."/>
            <person name="Heck A.J."/>
            <person name="Mohammed S."/>
        </authorList>
    </citation>
    <scope>PHOSPHORYLATION [LARGE SCALE ANALYSIS] AT SER-383; THR-826; SER-868; SER-917; SER-919; SER-932 AND SER-1041</scope>
    <scope>IDENTIFICATION BY MASS SPECTROMETRY [LARGE SCALE ANALYSIS]</scope>
    <source>
        <tissue>Cervix carcinoma</tissue>
        <tissue>Erythroleukemia</tissue>
    </source>
</reference>
<reference key="16">
    <citation type="journal article" date="2014" name="Proc. Natl. Acad. Sci. U.S.A.">
        <title>Mapping of SUMO sites and analysis of SUMOylation changes induced by external stimuli.</title>
        <authorList>
            <person name="Impens F."/>
            <person name="Radoshevich L."/>
            <person name="Cossart P."/>
            <person name="Ribet D."/>
        </authorList>
    </citation>
    <scope>SUMOYLATION [LARGE SCALE ANALYSIS] AT LYS-1127</scope>
    <scope>IDENTIFICATION BY MASS SPECTROMETRY [LARGE SCALE ANALYSIS]</scope>
</reference>
<reference key="17">
    <citation type="journal article" date="2015" name="Cell Rep.">
        <title>SUMO-2 orchestrates chromatin modifiers in response to DNA damage.</title>
        <authorList>
            <person name="Hendriks I.A."/>
            <person name="Treffers L.W."/>
            <person name="Verlaan-de Vries M."/>
            <person name="Olsen J.V."/>
            <person name="Vertegaal A.C."/>
        </authorList>
    </citation>
    <scope>SUMOYLATION [LARGE SCALE ANALYSIS] AT LYS-1127</scope>
    <scope>IDENTIFICATION BY MASS SPECTROMETRY [LARGE SCALE ANALYSIS]</scope>
</reference>
<reference key="18">
    <citation type="journal article" date="2017" name="Nat. Struct. Mol. Biol.">
        <title>Site-specific mapping of the human SUMO proteome reveals co-modification with phosphorylation.</title>
        <authorList>
            <person name="Hendriks I.A."/>
            <person name="Lyon D."/>
            <person name="Young C."/>
            <person name="Jensen L.J."/>
            <person name="Vertegaal A.C."/>
            <person name="Nielsen M.L."/>
        </authorList>
    </citation>
    <scope>SUMOYLATION [LARGE SCALE ANALYSIS] AT LYS-397 AND LYS-1127</scope>
    <scope>IDENTIFICATION BY MASS SPECTROMETRY [LARGE SCALE ANALYSIS]</scope>
</reference>
<reference key="19">
    <citation type="journal article" date="2022" name="Nature">
        <title>Fast and efficient DNA replication with purified human proteins.</title>
        <authorList>
            <person name="Baris Y."/>
            <person name="Taylor M.R.G."/>
            <person name="Aria V."/>
            <person name="Yeeles J.T.P."/>
        </authorList>
    </citation>
    <scope>FUNCTION</scope>
    <scope>SUBCELLULAR LOCATION</scope>
</reference>
<reference key="20">
    <citation type="submission" date="2006-05" db="PDB data bank">
        <title>Solution structure of the HMG box domain from human WD repeat and HMG-box DNA binding protein 1.</title>
        <authorList>
            <consortium name="RIKEN structural genomics initiative (RSGI)"/>
        </authorList>
    </citation>
    <scope>STRUCTURE BY NMR OF 1017-1084</scope>
</reference>
<reference evidence="14" key="21">
    <citation type="journal article" date="2020" name="Nucleic Acids Res.">
        <title>CryoEM structures of human CMG-ATPgammaS-DNA and CMG-AND-1 complexes.</title>
        <authorList>
            <person name="Rzechorzek N.J."/>
            <person name="Hardwick S.W."/>
            <person name="Jatikusumo V.A."/>
            <person name="Chirgadze D.Y."/>
            <person name="Pellegrini L."/>
        </authorList>
    </citation>
    <scope>STRUCTURE BY ELECTRON MICROSCOPY (3.29 ANGSTROMS) IN COMPLEX WITH CMG COMPLEX</scope>
    <scope>SUBUNIT</scope>
</reference>
<reference evidence="15" key="22">
    <citation type="journal article" date="2021" name="EMBO J.">
        <title>Structure of a human replisome shows the organisation and interactions of a DNA replication machine.</title>
        <authorList>
            <person name="Jones M.L."/>
            <person name="Baris Y."/>
            <person name="Taylor M.R.G."/>
            <person name="Yeeles J.T.P."/>
        </authorList>
    </citation>
    <scope>STRUCTURE BY ELECTRON MICROSCOPY (3.20 ANGSTROMS) IN REPLISOME</scope>
    <scope>SUBUNIT</scope>
    <scope>FUNCTION</scope>
    <scope>SUBCELLULAR LOCATION</scope>
</reference>
<reference evidence="16" key="23">
    <citation type="journal article" date="2021" name="Nature">
        <title>A conserved mechanism for regulating replisome disassembly in eukaryotes.</title>
        <authorList>
            <person name="Jenkyn-Bedford M."/>
            <person name="Jones M.L."/>
            <person name="Baris Y."/>
            <person name="Labib K.P.M."/>
            <person name="Cannone G."/>
            <person name="Yeeles J.T.P."/>
            <person name="Deegan T.D."/>
        </authorList>
    </citation>
    <scope>STRUCTURE BY ELECTRON MICROSCOPY (2.80 ANGSTROMS) IN REPLISOME</scope>
    <scope>SUBUNIT</scope>
</reference>
<proteinExistence type="evidence at protein level"/>
<protein>
    <recommendedName>
        <fullName evidence="10">WD repeat and HMG-box DNA-binding protein 1</fullName>
    </recommendedName>
    <alternativeName>
        <fullName>Acidic nucleoplasmic DNA-binding protein 1</fullName>
        <shortName>And-1</shortName>
    </alternativeName>
</protein>
<comment type="function">
    <text evidence="5 8 9">Core replisome component that acts as a replication initiation factor. Binds directly to the CMG complex and functions as a hub to recruit additional proteins to the replication fork.</text>
</comment>
<comment type="subunit">
    <text evidence="4 6 7 8">Trimer (PubMed:32453425, PubMed:34694004). Interacts with the polymerase alpha catalytic subunit POLA1. Interacts with MCM10 (PubMed:17761813). Interacts with DNA2 (PubMed:22570476). Interacts with CDC45 and GINS2 subunit of GINS complex; these interactions associate WDHD1 with the CMG helicase complex (PubMed:32453425, PubMed:34694004).</text>
</comment>
<comment type="interaction">
    <interactant intactId="EBI-3951691">
        <id>O75717</id>
    </interactant>
    <interactant intactId="EBI-477622">
        <id>Q92830</id>
        <label>KAT2A</label>
    </interactant>
    <organismsDiffer>false</organismsDiffer>
    <experiments>5</experiments>
</comment>
<comment type="subcellular location">
    <subcellularLocation>
        <location evidence="11 12">Nucleus</location>
        <location evidence="11 12">Nucleoplasm</location>
    </subcellularLocation>
</comment>
<comment type="alternative products">
    <event type="alternative splicing"/>
    <isoform>
        <id>O75717-1</id>
        <name>1</name>
        <sequence type="displayed"/>
    </isoform>
    <isoform>
        <id>O75717-2</id>
        <name>2</name>
        <sequence type="described" ref="VSP_054775"/>
    </isoform>
</comment>